<keyword id="KW-0002">3D-structure</keyword>
<keyword id="KW-1185">Reference proteome</keyword>
<keyword id="KW-0687">Ribonucleoprotein</keyword>
<keyword id="KW-0689">Ribosomal protein</keyword>
<dbReference type="EMBL" id="Y10015">
    <property type="protein sequence ID" value="CAA71121.1"/>
    <property type="molecule type" value="Genomic_DNA"/>
</dbReference>
<dbReference type="EMBL" id="Y10017">
    <property type="protein sequence ID" value="CAA71124.1"/>
    <property type="molecule type" value="mRNA"/>
</dbReference>
<dbReference type="EMBL" id="Y09766">
    <property type="protein sequence ID" value="CAA70905.1"/>
    <property type="molecule type" value="mRNA"/>
</dbReference>
<dbReference type="EMBL" id="AE014296">
    <property type="protein sequence ID" value="AAF50393.1"/>
    <property type="molecule type" value="Genomic_DNA"/>
</dbReference>
<dbReference type="RefSeq" id="NP_523975.1">
    <property type="nucleotide sequence ID" value="NM_079251.4"/>
</dbReference>
<dbReference type="PDB" id="4V6W">
    <property type="method" value="EM"/>
    <property type="resolution" value="6.00 A"/>
    <property type="chains" value="CM=1-166"/>
</dbReference>
<dbReference type="PDB" id="6XU6">
    <property type="method" value="EM"/>
    <property type="resolution" value="3.50 A"/>
    <property type="chains" value="CM=1-159"/>
</dbReference>
<dbReference type="PDB" id="6XU7">
    <property type="method" value="EM"/>
    <property type="resolution" value="4.90 A"/>
    <property type="chains" value="CM=1-159"/>
</dbReference>
<dbReference type="PDB" id="6XU8">
    <property type="method" value="EM"/>
    <property type="resolution" value="3.00 A"/>
    <property type="chains" value="CM=1-159"/>
</dbReference>
<dbReference type="PDBsum" id="4V6W"/>
<dbReference type="PDBsum" id="6XU6"/>
<dbReference type="PDBsum" id="6XU7"/>
<dbReference type="PDBsum" id="6XU8"/>
<dbReference type="EMDB" id="EMD-10622"/>
<dbReference type="EMDB" id="EMD-10623"/>
<dbReference type="EMDB" id="EMD-10624"/>
<dbReference type="SMR" id="P55841"/>
<dbReference type="BioGRID" id="64391">
    <property type="interactions" value="118"/>
</dbReference>
<dbReference type="DIP" id="DIP-20649N"/>
<dbReference type="FunCoup" id="P55841">
    <property type="interactions" value="1209"/>
</dbReference>
<dbReference type="IntAct" id="P55841">
    <property type="interactions" value="1"/>
</dbReference>
<dbReference type="MINT" id="P55841"/>
<dbReference type="STRING" id="7227.FBpp0076359"/>
<dbReference type="PaxDb" id="7227-FBpp0076359"/>
<dbReference type="DNASU" id="38983"/>
<dbReference type="EnsemblMetazoa" id="FBtr0076633">
    <property type="protein sequence ID" value="FBpp0076359"/>
    <property type="gene ID" value="FBgn0017579"/>
</dbReference>
<dbReference type="GeneID" id="38983"/>
<dbReference type="KEGG" id="dme:Dmel_CG6253"/>
<dbReference type="AGR" id="FB:FBgn0017579"/>
<dbReference type="CTD" id="9045"/>
<dbReference type="FlyBase" id="FBgn0017579">
    <property type="gene designation" value="RpL14"/>
</dbReference>
<dbReference type="VEuPathDB" id="VectorBase:FBgn0017579"/>
<dbReference type="eggNOG" id="KOG3421">
    <property type="taxonomic scope" value="Eukaryota"/>
</dbReference>
<dbReference type="HOGENOM" id="CLU_082438_2_0_1"/>
<dbReference type="InParanoid" id="P55841"/>
<dbReference type="OMA" id="KLCFVVD"/>
<dbReference type="OrthoDB" id="1875589at2759"/>
<dbReference type="PhylomeDB" id="P55841"/>
<dbReference type="Reactome" id="R-DME-156827">
    <property type="pathway name" value="L13a-mediated translational silencing of Ceruloplasmin expression"/>
</dbReference>
<dbReference type="Reactome" id="R-DME-1799339">
    <property type="pathway name" value="SRP-dependent cotranslational protein targeting to membrane"/>
</dbReference>
<dbReference type="Reactome" id="R-DME-72689">
    <property type="pathway name" value="Formation of a pool of free 40S subunits"/>
</dbReference>
<dbReference type="Reactome" id="R-DME-72706">
    <property type="pathway name" value="GTP hydrolysis and joining of the 60S ribosomal subunit"/>
</dbReference>
<dbReference type="Reactome" id="R-DME-975956">
    <property type="pathway name" value="Nonsense Mediated Decay (NMD) independent of the Exon Junction Complex (EJC)"/>
</dbReference>
<dbReference type="Reactome" id="R-DME-975957">
    <property type="pathway name" value="Nonsense Mediated Decay (NMD) enhanced by the Exon Junction Complex (EJC)"/>
</dbReference>
<dbReference type="SignaLink" id="P55841"/>
<dbReference type="BioGRID-ORCS" id="38983">
    <property type="hits" value="1 hit in 1 CRISPR screen"/>
</dbReference>
<dbReference type="ChiTaRS" id="RpL14">
    <property type="organism name" value="fly"/>
</dbReference>
<dbReference type="GenomeRNAi" id="38983"/>
<dbReference type="PRO" id="PR:P55841"/>
<dbReference type="Proteomes" id="UP000000803">
    <property type="component" value="Chromosome 3L"/>
</dbReference>
<dbReference type="Bgee" id="FBgn0017579">
    <property type="expression patterns" value="Expressed in adult enteroendocrine precursor cell in adult midgut (Drosophila) and 278 other cell types or tissues"/>
</dbReference>
<dbReference type="ExpressionAtlas" id="P55841">
    <property type="expression patterns" value="baseline and differential"/>
</dbReference>
<dbReference type="GO" id="GO:0022625">
    <property type="term" value="C:cytosolic large ribosomal subunit"/>
    <property type="evidence" value="ECO:0000318"/>
    <property type="project" value="GO_Central"/>
</dbReference>
<dbReference type="GO" id="GO:0022626">
    <property type="term" value="C:cytosolic ribosome"/>
    <property type="evidence" value="ECO:0000314"/>
    <property type="project" value="FlyBase"/>
</dbReference>
<dbReference type="GO" id="GO:0003723">
    <property type="term" value="F:RNA binding"/>
    <property type="evidence" value="ECO:0000318"/>
    <property type="project" value="GO_Central"/>
</dbReference>
<dbReference type="GO" id="GO:0003735">
    <property type="term" value="F:structural constituent of ribosome"/>
    <property type="evidence" value="ECO:0000314"/>
    <property type="project" value="FlyBase"/>
</dbReference>
<dbReference type="GO" id="GO:0002181">
    <property type="term" value="P:cytoplasmic translation"/>
    <property type="evidence" value="ECO:0000304"/>
    <property type="project" value="FlyBase"/>
</dbReference>
<dbReference type="GO" id="GO:0043524">
    <property type="term" value="P:negative regulation of neuron apoptotic process"/>
    <property type="evidence" value="ECO:0000315"/>
    <property type="project" value="FlyBase"/>
</dbReference>
<dbReference type="GO" id="GO:0042273">
    <property type="term" value="P:ribosomal large subunit biogenesis"/>
    <property type="evidence" value="ECO:0000318"/>
    <property type="project" value="GO_Central"/>
</dbReference>
<dbReference type="CDD" id="cd23702">
    <property type="entry name" value="eL14"/>
    <property type="match status" value="1"/>
</dbReference>
<dbReference type="FunFam" id="2.30.30.30:FF:000050">
    <property type="entry name" value="60S ribosomal protein L14"/>
    <property type="match status" value="1"/>
</dbReference>
<dbReference type="Gene3D" id="2.30.30.30">
    <property type="match status" value="1"/>
</dbReference>
<dbReference type="Gene3D" id="6.10.250.2270">
    <property type="match status" value="1"/>
</dbReference>
<dbReference type="InterPro" id="IPR014722">
    <property type="entry name" value="Rib_uL2_dom2"/>
</dbReference>
<dbReference type="InterPro" id="IPR039660">
    <property type="entry name" value="Ribosomal_eL14"/>
</dbReference>
<dbReference type="InterPro" id="IPR002784">
    <property type="entry name" value="Ribosomal_eL14_dom"/>
</dbReference>
<dbReference type="InterPro" id="IPR008991">
    <property type="entry name" value="Translation_prot_SH3-like_sf"/>
</dbReference>
<dbReference type="PANTHER" id="PTHR11127">
    <property type="entry name" value="60S RIBOSOMAL PROTEIN L14"/>
    <property type="match status" value="1"/>
</dbReference>
<dbReference type="PANTHER" id="PTHR11127:SF2">
    <property type="entry name" value="LARGE RIBOSOMAL SUBUNIT PROTEIN EL14"/>
    <property type="match status" value="1"/>
</dbReference>
<dbReference type="Pfam" id="PF01929">
    <property type="entry name" value="Ribosomal_L14e"/>
    <property type="match status" value="1"/>
</dbReference>
<dbReference type="SUPFAM" id="SSF50104">
    <property type="entry name" value="Translation proteins SH3-like domain"/>
    <property type="match status" value="1"/>
</dbReference>
<protein>
    <recommendedName>
        <fullName evidence="2">Large ribosomal subunit protein eL14</fullName>
    </recommendedName>
    <alternativeName>
        <fullName>60S ribosomal protein L14</fullName>
    </alternativeName>
</protein>
<gene>
    <name type="primary">RpL14</name>
    <name type="ORF">CG6253</name>
</gene>
<evidence type="ECO:0000256" key="1">
    <source>
        <dbReference type="SAM" id="MobiDB-lite"/>
    </source>
</evidence>
<evidence type="ECO:0000305" key="2"/>
<organism>
    <name type="scientific">Drosophila melanogaster</name>
    <name type="common">Fruit fly</name>
    <dbReference type="NCBI Taxonomy" id="7227"/>
    <lineage>
        <taxon>Eukaryota</taxon>
        <taxon>Metazoa</taxon>
        <taxon>Ecdysozoa</taxon>
        <taxon>Arthropoda</taxon>
        <taxon>Hexapoda</taxon>
        <taxon>Insecta</taxon>
        <taxon>Pterygota</taxon>
        <taxon>Neoptera</taxon>
        <taxon>Endopterygota</taxon>
        <taxon>Diptera</taxon>
        <taxon>Brachycera</taxon>
        <taxon>Muscomorpha</taxon>
        <taxon>Ephydroidea</taxon>
        <taxon>Drosophilidae</taxon>
        <taxon>Drosophila</taxon>
        <taxon>Sophophora</taxon>
    </lineage>
</organism>
<reference key="1">
    <citation type="submission" date="1996-12" db="EMBL/GenBank/DDBJ databases">
        <authorList>
            <person name="Saeboe-Larssen S."/>
            <person name="Mohebi B."/>
            <person name="Angel S."/>
            <person name="Lambertsson A."/>
        </authorList>
    </citation>
    <scope>NUCLEOTIDE SEQUENCE</scope>
    <source>
        <strain>Canton-S</strain>
        <strain>Shahrinau</strain>
    </source>
</reference>
<reference key="2">
    <citation type="submission" date="1997-02" db="EMBL/GenBank/DDBJ databases">
        <authorList>
            <person name="Haynes S.R."/>
        </authorList>
    </citation>
    <scope>NUCLEOTIDE SEQUENCE</scope>
    <source>
        <strain>Canton-S</strain>
        <tissue>Ovary</tissue>
    </source>
</reference>
<reference key="3">
    <citation type="journal article" date="2000" name="Science">
        <title>The genome sequence of Drosophila melanogaster.</title>
        <authorList>
            <person name="Adams M.D."/>
            <person name="Celniker S.E."/>
            <person name="Holt R.A."/>
            <person name="Evans C.A."/>
            <person name="Gocayne J.D."/>
            <person name="Amanatides P.G."/>
            <person name="Scherer S.E."/>
            <person name="Li P.W."/>
            <person name="Hoskins R.A."/>
            <person name="Galle R.F."/>
            <person name="George R.A."/>
            <person name="Lewis S.E."/>
            <person name="Richards S."/>
            <person name="Ashburner M."/>
            <person name="Henderson S.N."/>
            <person name="Sutton G.G."/>
            <person name="Wortman J.R."/>
            <person name="Yandell M.D."/>
            <person name="Zhang Q."/>
            <person name="Chen L.X."/>
            <person name="Brandon R.C."/>
            <person name="Rogers Y.-H.C."/>
            <person name="Blazej R.G."/>
            <person name="Champe M."/>
            <person name="Pfeiffer B.D."/>
            <person name="Wan K.H."/>
            <person name="Doyle C."/>
            <person name="Baxter E.G."/>
            <person name="Helt G."/>
            <person name="Nelson C.R."/>
            <person name="Miklos G.L.G."/>
            <person name="Abril J.F."/>
            <person name="Agbayani A."/>
            <person name="An H.-J."/>
            <person name="Andrews-Pfannkoch C."/>
            <person name="Baldwin D."/>
            <person name="Ballew R.M."/>
            <person name="Basu A."/>
            <person name="Baxendale J."/>
            <person name="Bayraktaroglu L."/>
            <person name="Beasley E.M."/>
            <person name="Beeson K.Y."/>
            <person name="Benos P.V."/>
            <person name="Berman B.P."/>
            <person name="Bhandari D."/>
            <person name="Bolshakov S."/>
            <person name="Borkova D."/>
            <person name="Botchan M.R."/>
            <person name="Bouck J."/>
            <person name="Brokstein P."/>
            <person name="Brottier P."/>
            <person name="Burtis K.C."/>
            <person name="Busam D.A."/>
            <person name="Butler H."/>
            <person name="Cadieu E."/>
            <person name="Center A."/>
            <person name="Chandra I."/>
            <person name="Cherry J.M."/>
            <person name="Cawley S."/>
            <person name="Dahlke C."/>
            <person name="Davenport L.B."/>
            <person name="Davies P."/>
            <person name="de Pablos B."/>
            <person name="Delcher A."/>
            <person name="Deng Z."/>
            <person name="Mays A.D."/>
            <person name="Dew I."/>
            <person name="Dietz S.M."/>
            <person name="Dodson K."/>
            <person name="Doup L.E."/>
            <person name="Downes M."/>
            <person name="Dugan-Rocha S."/>
            <person name="Dunkov B.C."/>
            <person name="Dunn P."/>
            <person name="Durbin K.J."/>
            <person name="Evangelista C.C."/>
            <person name="Ferraz C."/>
            <person name="Ferriera S."/>
            <person name="Fleischmann W."/>
            <person name="Fosler C."/>
            <person name="Gabrielian A.E."/>
            <person name="Garg N.S."/>
            <person name="Gelbart W.M."/>
            <person name="Glasser K."/>
            <person name="Glodek A."/>
            <person name="Gong F."/>
            <person name="Gorrell J.H."/>
            <person name="Gu Z."/>
            <person name="Guan P."/>
            <person name="Harris M."/>
            <person name="Harris N.L."/>
            <person name="Harvey D.A."/>
            <person name="Heiman T.J."/>
            <person name="Hernandez J.R."/>
            <person name="Houck J."/>
            <person name="Hostin D."/>
            <person name="Houston K.A."/>
            <person name="Howland T.J."/>
            <person name="Wei M.-H."/>
            <person name="Ibegwam C."/>
            <person name="Jalali M."/>
            <person name="Kalush F."/>
            <person name="Karpen G.H."/>
            <person name="Ke Z."/>
            <person name="Kennison J.A."/>
            <person name="Ketchum K.A."/>
            <person name="Kimmel B.E."/>
            <person name="Kodira C.D."/>
            <person name="Kraft C.L."/>
            <person name="Kravitz S."/>
            <person name="Kulp D."/>
            <person name="Lai Z."/>
            <person name="Lasko P."/>
            <person name="Lei Y."/>
            <person name="Levitsky A.A."/>
            <person name="Li J.H."/>
            <person name="Li Z."/>
            <person name="Liang Y."/>
            <person name="Lin X."/>
            <person name="Liu X."/>
            <person name="Mattei B."/>
            <person name="McIntosh T.C."/>
            <person name="McLeod M.P."/>
            <person name="McPherson D."/>
            <person name="Merkulov G."/>
            <person name="Milshina N.V."/>
            <person name="Mobarry C."/>
            <person name="Morris J."/>
            <person name="Moshrefi A."/>
            <person name="Mount S.M."/>
            <person name="Moy M."/>
            <person name="Murphy B."/>
            <person name="Murphy L."/>
            <person name="Muzny D.M."/>
            <person name="Nelson D.L."/>
            <person name="Nelson D.R."/>
            <person name="Nelson K.A."/>
            <person name="Nixon K."/>
            <person name="Nusskern D.R."/>
            <person name="Pacleb J.M."/>
            <person name="Palazzolo M."/>
            <person name="Pittman G.S."/>
            <person name="Pan S."/>
            <person name="Pollard J."/>
            <person name="Puri V."/>
            <person name="Reese M.G."/>
            <person name="Reinert K."/>
            <person name="Remington K."/>
            <person name="Saunders R.D.C."/>
            <person name="Scheeler F."/>
            <person name="Shen H."/>
            <person name="Shue B.C."/>
            <person name="Siden-Kiamos I."/>
            <person name="Simpson M."/>
            <person name="Skupski M.P."/>
            <person name="Smith T.J."/>
            <person name="Spier E."/>
            <person name="Spradling A.C."/>
            <person name="Stapleton M."/>
            <person name="Strong R."/>
            <person name="Sun E."/>
            <person name="Svirskas R."/>
            <person name="Tector C."/>
            <person name="Turner R."/>
            <person name="Venter E."/>
            <person name="Wang A.H."/>
            <person name="Wang X."/>
            <person name="Wang Z.-Y."/>
            <person name="Wassarman D.A."/>
            <person name="Weinstock G.M."/>
            <person name="Weissenbach J."/>
            <person name="Williams S.M."/>
            <person name="Woodage T."/>
            <person name="Worley K.C."/>
            <person name="Wu D."/>
            <person name="Yang S."/>
            <person name="Yao Q.A."/>
            <person name="Ye J."/>
            <person name="Yeh R.-F."/>
            <person name="Zaveri J.S."/>
            <person name="Zhan M."/>
            <person name="Zhang G."/>
            <person name="Zhao Q."/>
            <person name="Zheng L."/>
            <person name="Zheng X.H."/>
            <person name="Zhong F.N."/>
            <person name="Zhong W."/>
            <person name="Zhou X."/>
            <person name="Zhu S.C."/>
            <person name="Zhu X."/>
            <person name="Smith H.O."/>
            <person name="Gibbs R.A."/>
            <person name="Myers E.W."/>
            <person name="Rubin G.M."/>
            <person name="Venter J.C."/>
        </authorList>
    </citation>
    <scope>NUCLEOTIDE SEQUENCE [LARGE SCALE GENOMIC DNA]</scope>
    <source>
        <strain>Berkeley</strain>
    </source>
</reference>
<reference key="4">
    <citation type="journal article" date="2002" name="Genome Biol.">
        <title>Annotation of the Drosophila melanogaster euchromatic genome: a systematic review.</title>
        <authorList>
            <person name="Misra S."/>
            <person name="Crosby M.A."/>
            <person name="Mungall C.J."/>
            <person name="Matthews B.B."/>
            <person name="Campbell K.S."/>
            <person name="Hradecky P."/>
            <person name="Huang Y."/>
            <person name="Kaminker J.S."/>
            <person name="Millburn G.H."/>
            <person name="Prochnik S.E."/>
            <person name="Smith C.D."/>
            <person name="Tupy J.L."/>
            <person name="Whitfield E.J."/>
            <person name="Bayraktaroglu L."/>
            <person name="Berman B.P."/>
            <person name="Bettencourt B.R."/>
            <person name="Celniker S.E."/>
            <person name="de Grey A.D.N.J."/>
            <person name="Drysdale R.A."/>
            <person name="Harris N.L."/>
            <person name="Richter J."/>
            <person name="Russo S."/>
            <person name="Schroeder A.J."/>
            <person name="Shu S.Q."/>
            <person name="Stapleton M."/>
            <person name="Yamada C."/>
            <person name="Ashburner M."/>
            <person name="Gelbart W.M."/>
            <person name="Rubin G.M."/>
            <person name="Lewis S.E."/>
        </authorList>
    </citation>
    <scope>GENOME REANNOTATION</scope>
    <source>
        <strain>Berkeley</strain>
    </source>
</reference>
<reference key="5">
    <citation type="journal article" date="2013" name="Nature">
        <title>Structures of the human and Drosophila 80S ribosome.</title>
        <authorList>
            <person name="Anger A.M."/>
            <person name="Armache J.P."/>
            <person name="Berninghausen O."/>
            <person name="Habeck M."/>
            <person name="Subklewe M."/>
            <person name="Wilson D.N."/>
            <person name="Beckmann R."/>
        </authorList>
    </citation>
    <scope>STRUCTURE BY ELECTRON MICROSCOPY (6.0 ANGSTROMS) OF THE 80S RIBOSOME</scope>
</reference>
<accession>P55841</accession>
<accession>Q9VSM3</accession>
<feature type="chain" id="PRO_0000132034" description="Large ribosomal subunit protein eL14">
    <location>
        <begin position="1"/>
        <end position="166"/>
    </location>
</feature>
<feature type="region of interest" description="Disordered" evidence="1">
    <location>
        <begin position="135"/>
        <end position="166"/>
    </location>
</feature>
<feature type="compositionally biased region" description="Basic and acidic residues" evidence="1">
    <location>
        <begin position="146"/>
        <end position="157"/>
    </location>
</feature>
<proteinExistence type="evidence at protein level"/>
<name>RL14_DROME</name>
<comment type="similarity">
    <text evidence="2">Belongs to the eukaryotic ribosomal protein eL14 family.</text>
</comment>
<sequence length="166" mass="19174">MPFERFVQTGRIAKASAGPLKGRLVAIVDVIDQNRVLVDGPLTGVPRQEYRLNNLHLTKYRIKFPYTAPTRIVRKAWTESDLKAQWKVSPWSVKAQNICKRSSLNDFDRFKLRYAKRQRNKLLTIAFNTLKKRTKADGTPRVLKKDRRERLRAEKAKGGKKAAAKK</sequence>